<feature type="chain" id="PRO_0000326452" description="FGGY carbohydrate kinase domain-containing protein">
    <location>
        <begin position="1"/>
        <end position="551"/>
    </location>
</feature>
<feature type="splice variant" id="VSP_054533" description="In isoform 6." evidence="3">
    <location>
        <begin position="1"/>
        <end position="299"/>
    </location>
</feature>
<feature type="splice variant" id="VSP_032658" description="In isoform 2 and isoform 3." evidence="3">
    <location>
        <begin position="1"/>
        <end position="112"/>
    </location>
</feature>
<feature type="splice variant" id="VSP_045338" description="In isoform 5." evidence="3">
    <location>
        <begin position="68"/>
        <end position="155"/>
    </location>
</feature>
<feature type="splice variant" id="VSP_032659" description="In isoform 2." evidence="3">
    <location>
        <begin position="359"/>
        <end position="551"/>
    </location>
</feature>
<feature type="splice variant" id="VSP_033424" description="In isoform 4." evidence="5">
    <original>M</original>
    <variation>MRTTGYLYIPALAALHSPSSLLSPQ</variation>
    <location>
        <position position="407"/>
    </location>
</feature>
<feature type="sequence variant" id="VAR_059193" description="In dbSNP:rs835409.">
    <original>N</original>
    <variation>K</variation>
    <location>
        <position position="43"/>
    </location>
</feature>
<feature type="sequence variant" id="VAR_040072" description="In dbSNP:rs11207463.">
    <original>L</original>
    <variation>V</variation>
    <location>
        <position position="134"/>
    </location>
</feature>
<feature type="sequence variant" id="VAR_059194" description="In dbSNP:rs11207463.">
    <original>L</original>
    <variation>V</variation>
    <location>
        <position position="246"/>
    </location>
</feature>
<evidence type="ECO:0000269" key="1">
    <source>
    </source>
</evidence>
<evidence type="ECO:0000269" key="2">
    <source>
    </source>
</evidence>
<evidence type="ECO:0000303" key="3">
    <source>
    </source>
</evidence>
<evidence type="ECO:0000303" key="4">
    <source>
    </source>
</evidence>
<evidence type="ECO:0000305" key="5"/>
<evidence type="ECO:0000305" key="6">
    <source>
    </source>
</evidence>
<sequence>MSGGEQKPERYYVGVDVGTGSVRAALVDQSGVLLAFADQPIKNWEPQFNHHEQSSEDIWAACCVVTKKVVQGIDLNQIRGLGFDATCSLVVLDKQFHPLPVNQEGDSHRNVIMWLDHRAVSQVNRINETKHSVLQYVGGVMSVEMQAPKLLWLKENLREICWDKAGHFFDLPDFLSWKATGVTARSLCSLVCKWTYSAEKGWDDSFWKMIGLEDFVADNYSKIGNQVLPPGASLGNGLTPEAARDLGLLPGIAVAASLIDAHAGGLGVIGADVRGHGLICEGQPVTSRLAVICGTSSCHMGISKDPIFVPGVWGPYFSAMVPGFWLNEGGQSVTGKLIDHMVQGHAAFPELQVKATARCQSIYAYLNSHLDLIKKAQPVGFLTVDLHVWPDFHGNRSPLADLTLKGMVTGLKLSQDLDDLAILYLATVQAIALGTRFIIEAMEAAGHSISTLFLCGGLSKNPLFVQMHADITGMPVVLSQEVESVLVGAAVLGACASGDFASVQEAMAKMSKVGKVVFPRLQDKKYYDKKYQVFLKLVEHQKEYLAIMNDD</sequence>
<organism>
    <name type="scientific">Homo sapiens</name>
    <name type="common">Human</name>
    <dbReference type="NCBI Taxonomy" id="9606"/>
    <lineage>
        <taxon>Eukaryota</taxon>
        <taxon>Metazoa</taxon>
        <taxon>Chordata</taxon>
        <taxon>Craniata</taxon>
        <taxon>Vertebrata</taxon>
        <taxon>Euteleostomi</taxon>
        <taxon>Mammalia</taxon>
        <taxon>Eutheria</taxon>
        <taxon>Euarchontoglires</taxon>
        <taxon>Primates</taxon>
        <taxon>Haplorrhini</taxon>
        <taxon>Catarrhini</taxon>
        <taxon>Hominidae</taxon>
        <taxon>Homo</taxon>
    </lineage>
</organism>
<gene>
    <name evidence="4" type="primary">FGGY</name>
</gene>
<protein>
    <recommendedName>
        <fullName>FGGY carbohydrate kinase domain-containing protein</fullName>
    </recommendedName>
    <alternativeName>
        <fullName evidence="4">D-ribulokinase FGGY</fullName>
        <ecNumber evidence="2">2.7.1.47</ecNumber>
    </alternativeName>
</protein>
<proteinExistence type="evidence at protein level"/>
<dbReference type="EC" id="2.7.1.47" evidence="2"/>
<dbReference type="EMBL" id="AK001848">
    <property type="protein sequence ID" value="BAA91940.1"/>
    <property type="molecule type" value="mRNA"/>
</dbReference>
<dbReference type="EMBL" id="AK022237">
    <property type="protein sequence ID" value="BAB13993.1"/>
    <property type="molecule type" value="mRNA"/>
</dbReference>
<dbReference type="EMBL" id="AK054842">
    <property type="protein sequence ID" value="BAG51432.1"/>
    <property type="molecule type" value="mRNA"/>
</dbReference>
<dbReference type="EMBL" id="AK315649">
    <property type="protein sequence ID" value="BAG38015.1"/>
    <property type="molecule type" value="mRNA"/>
</dbReference>
<dbReference type="EMBL" id="AL954338">
    <property type="status" value="NOT_ANNOTATED_CDS"/>
    <property type="molecule type" value="Genomic_DNA"/>
</dbReference>
<dbReference type="EMBL" id="AC093424">
    <property type="status" value="NOT_ANNOTATED_CDS"/>
    <property type="molecule type" value="Genomic_DNA"/>
</dbReference>
<dbReference type="EMBL" id="AL035416">
    <property type="status" value="NOT_ANNOTATED_CDS"/>
    <property type="molecule type" value="Genomic_DNA"/>
</dbReference>
<dbReference type="EMBL" id="AL390234">
    <property type="status" value="NOT_ANNOTATED_CDS"/>
    <property type="molecule type" value="Genomic_DNA"/>
</dbReference>
<dbReference type="EMBL" id="AL713859">
    <property type="status" value="NOT_ANNOTATED_CDS"/>
    <property type="molecule type" value="Genomic_DNA"/>
</dbReference>
<dbReference type="EMBL" id="BX119322">
    <property type="status" value="NOT_ANNOTATED_CDS"/>
    <property type="molecule type" value="Genomic_DNA"/>
</dbReference>
<dbReference type="EMBL" id="CH471059">
    <property type="protein sequence ID" value="EAX06619.1"/>
    <property type="molecule type" value="Genomic_DNA"/>
</dbReference>
<dbReference type="EMBL" id="CH471059">
    <property type="protein sequence ID" value="EAX06621.1"/>
    <property type="molecule type" value="Genomic_DNA"/>
</dbReference>
<dbReference type="EMBL" id="CH471059">
    <property type="protein sequence ID" value="EAX06622.1"/>
    <property type="molecule type" value="Genomic_DNA"/>
</dbReference>
<dbReference type="EMBL" id="CH471059">
    <property type="protein sequence ID" value="EAX06623.1"/>
    <property type="molecule type" value="Genomic_DNA"/>
</dbReference>
<dbReference type="EMBL" id="CH471059">
    <property type="protein sequence ID" value="EAX06624.1"/>
    <property type="molecule type" value="Genomic_DNA"/>
</dbReference>
<dbReference type="EMBL" id="BC014947">
    <property type="protein sequence ID" value="AAH14947.1"/>
    <property type="status" value="ALT_INIT"/>
    <property type="molecule type" value="mRNA"/>
</dbReference>
<dbReference type="CCDS" id="CCDS44155.1">
    <molecule id="Q96C11-3"/>
</dbReference>
<dbReference type="CCDS" id="CCDS58003.1">
    <molecule id="Q96C11-5"/>
</dbReference>
<dbReference type="CCDS" id="CCDS60155.1">
    <molecule id="Q96C11-6"/>
</dbReference>
<dbReference type="CCDS" id="CCDS611.2">
    <molecule id="Q96C11-1"/>
</dbReference>
<dbReference type="RefSeq" id="NP_001106882.1">
    <molecule id="Q96C11-3"/>
    <property type="nucleotide sequence ID" value="NM_001113411.2"/>
</dbReference>
<dbReference type="RefSeq" id="NP_001231643.1">
    <molecule id="Q96C11-5"/>
    <property type="nucleotide sequence ID" value="NM_001244714.2"/>
</dbReference>
<dbReference type="RefSeq" id="NP_001265153.1">
    <molecule id="Q96C11-6"/>
    <property type="nucleotide sequence ID" value="NM_001278224.2"/>
</dbReference>
<dbReference type="RefSeq" id="NP_001337719.1">
    <molecule id="Q96C11-3"/>
    <property type="nucleotide sequence ID" value="NM_001350790.2"/>
</dbReference>
<dbReference type="RefSeq" id="NP_001337720.1">
    <molecule id="Q96C11-1"/>
    <property type="nucleotide sequence ID" value="NM_001350791.2"/>
</dbReference>
<dbReference type="RefSeq" id="NP_001337725.1">
    <molecule id="Q96C11-4"/>
    <property type="nucleotide sequence ID" value="NM_001350796.2"/>
</dbReference>
<dbReference type="RefSeq" id="NP_060761.3">
    <molecule id="Q96C11-1"/>
    <property type="nucleotide sequence ID" value="NM_018291.3"/>
</dbReference>
<dbReference type="RefSeq" id="XP_011540032.1">
    <molecule id="Q96C11-3"/>
    <property type="nucleotide sequence ID" value="XM_011541730.2"/>
</dbReference>
<dbReference type="RefSeq" id="XP_011540033.1">
    <molecule id="Q96C11-3"/>
    <property type="nucleotide sequence ID" value="XM_011541731.2"/>
</dbReference>
<dbReference type="RefSeq" id="XP_011540034.1">
    <property type="nucleotide sequence ID" value="XM_011541732.1"/>
</dbReference>
<dbReference type="RefSeq" id="XP_011540035.1">
    <property type="nucleotide sequence ID" value="XM_011541733.1"/>
</dbReference>
<dbReference type="RefSeq" id="XP_011540037.1">
    <property type="nucleotide sequence ID" value="XM_011541735.1"/>
</dbReference>
<dbReference type="RefSeq" id="XP_016857132.1">
    <molecule id="Q96C11-3"/>
    <property type="nucleotide sequence ID" value="XM_017001643.3"/>
</dbReference>
<dbReference type="RefSeq" id="XP_016857133.1">
    <property type="nucleotide sequence ID" value="XM_017001644.1"/>
</dbReference>
<dbReference type="RefSeq" id="XP_016857134.1">
    <molecule id="Q96C11-1"/>
    <property type="nucleotide sequence ID" value="XM_017001645.2"/>
</dbReference>
<dbReference type="RefSeq" id="XP_016857135.1">
    <molecule id="Q96C11-1"/>
    <property type="nucleotide sequence ID" value="XM_017001646.2"/>
</dbReference>
<dbReference type="RefSeq" id="XP_016857136.1">
    <property type="nucleotide sequence ID" value="XM_017001647.1"/>
</dbReference>
<dbReference type="RefSeq" id="XP_016857155.1">
    <property type="nucleotide sequence ID" value="XM_017001666.1"/>
</dbReference>
<dbReference type="RefSeq" id="XP_016857156.1">
    <property type="nucleotide sequence ID" value="XM_017001667.1"/>
</dbReference>
<dbReference type="RefSeq" id="XP_016857161.1">
    <property type="nucleotide sequence ID" value="XM_017001672.1"/>
</dbReference>
<dbReference type="RefSeq" id="XP_016857162.1">
    <property type="nucleotide sequence ID" value="XM_017001673.1"/>
</dbReference>
<dbReference type="RefSeq" id="XP_024303944.1">
    <molecule id="Q96C11-3"/>
    <property type="nucleotide sequence ID" value="XM_024448176.2"/>
</dbReference>
<dbReference type="RefSeq" id="XP_047280336.1">
    <molecule id="Q96C11-3"/>
    <property type="nucleotide sequence ID" value="XM_047424380.1"/>
</dbReference>
<dbReference type="RefSeq" id="XP_047280337.1">
    <molecule id="Q96C11-3"/>
    <property type="nucleotide sequence ID" value="XM_047424381.1"/>
</dbReference>
<dbReference type="RefSeq" id="XP_047280338.1">
    <molecule id="Q96C11-3"/>
    <property type="nucleotide sequence ID" value="XM_047424382.1"/>
</dbReference>
<dbReference type="RefSeq" id="XP_047280339.1">
    <molecule id="Q96C11-3"/>
    <property type="nucleotide sequence ID" value="XM_047424383.1"/>
</dbReference>
<dbReference type="RefSeq" id="XP_047280340.1">
    <molecule id="Q96C11-3"/>
    <property type="nucleotide sequence ID" value="XM_047424384.1"/>
</dbReference>
<dbReference type="RefSeq" id="XP_047280341.1">
    <molecule id="Q96C11-3"/>
    <property type="nucleotide sequence ID" value="XM_047424385.1"/>
</dbReference>
<dbReference type="RefSeq" id="XP_047280342.1">
    <molecule id="Q96C11-1"/>
    <property type="nucleotide sequence ID" value="XM_047424386.1"/>
</dbReference>
<dbReference type="RefSeq" id="XP_047280343.1">
    <molecule id="Q96C11-1"/>
    <property type="nucleotide sequence ID" value="XM_047424387.1"/>
</dbReference>
<dbReference type="RefSeq" id="XP_047280344.1">
    <molecule id="Q96C11-1"/>
    <property type="nucleotide sequence ID" value="XM_047424388.1"/>
</dbReference>
<dbReference type="RefSeq" id="XP_047280346.1">
    <molecule id="Q96C11-5"/>
    <property type="nucleotide sequence ID" value="XM_047424390.1"/>
</dbReference>
<dbReference type="RefSeq" id="XP_047280347.1">
    <molecule id="Q96C11-5"/>
    <property type="nucleotide sequence ID" value="XM_047424391.1"/>
</dbReference>
<dbReference type="RefSeq" id="XP_054193428.1">
    <molecule id="Q96C11-3"/>
    <property type="nucleotide sequence ID" value="XM_054337453.1"/>
</dbReference>
<dbReference type="RefSeq" id="XP_054193429.1">
    <molecule id="Q96C11-3"/>
    <property type="nucleotide sequence ID" value="XM_054337454.1"/>
</dbReference>
<dbReference type="RefSeq" id="XP_054193430.1">
    <molecule id="Q96C11-3"/>
    <property type="nucleotide sequence ID" value="XM_054337455.1"/>
</dbReference>
<dbReference type="RefSeq" id="XP_054193431.1">
    <molecule id="Q96C11-3"/>
    <property type="nucleotide sequence ID" value="XM_054337456.1"/>
</dbReference>
<dbReference type="RefSeq" id="XP_054193432.1">
    <molecule id="Q96C11-3"/>
    <property type="nucleotide sequence ID" value="XM_054337457.1"/>
</dbReference>
<dbReference type="RefSeq" id="XP_054193433.1">
    <molecule id="Q96C11-3"/>
    <property type="nucleotide sequence ID" value="XM_054337458.1"/>
</dbReference>
<dbReference type="RefSeq" id="XP_054193434.1">
    <molecule id="Q96C11-3"/>
    <property type="nucleotide sequence ID" value="XM_054337459.1"/>
</dbReference>
<dbReference type="RefSeq" id="XP_054193435.1">
    <molecule id="Q96C11-3"/>
    <property type="nucleotide sequence ID" value="XM_054337460.1"/>
</dbReference>
<dbReference type="RefSeq" id="XP_054193436.1">
    <molecule id="Q96C11-3"/>
    <property type="nucleotide sequence ID" value="XM_054337461.1"/>
</dbReference>
<dbReference type="RefSeq" id="XP_054193437.1">
    <molecule id="Q96C11-3"/>
    <property type="nucleotide sequence ID" value="XM_054337462.1"/>
</dbReference>
<dbReference type="RefSeq" id="XP_054193438.1">
    <molecule id="Q96C11-1"/>
    <property type="nucleotide sequence ID" value="XM_054337463.1"/>
</dbReference>
<dbReference type="RefSeq" id="XP_054193439.1">
    <molecule id="Q96C11-1"/>
    <property type="nucleotide sequence ID" value="XM_054337464.1"/>
</dbReference>
<dbReference type="RefSeq" id="XP_054193440.1">
    <molecule id="Q96C11-1"/>
    <property type="nucleotide sequence ID" value="XM_054337465.1"/>
</dbReference>
<dbReference type="RefSeq" id="XP_054193441.1">
    <molecule id="Q96C11-1"/>
    <property type="nucleotide sequence ID" value="XM_054337466.1"/>
</dbReference>
<dbReference type="RefSeq" id="XP_054193442.1">
    <molecule id="Q96C11-1"/>
    <property type="nucleotide sequence ID" value="XM_054337467.1"/>
</dbReference>
<dbReference type="RefSeq" id="XP_054193448.1">
    <molecule id="Q96C11-5"/>
    <property type="nucleotide sequence ID" value="XM_054337473.1"/>
</dbReference>
<dbReference type="RefSeq" id="XP_054193449.1">
    <molecule id="Q96C11-5"/>
    <property type="nucleotide sequence ID" value="XM_054337474.1"/>
</dbReference>
<dbReference type="SMR" id="Q96C11"/>
<dbReference type="BioGRID" id="120565">
    <property type="interactions" value="4"/>
</dbReference>
<dbReference type="FunCoup" id="Q96C11">
    <property type="interactions" value="138"/>
</dbReference>
<dbReference type="IntAct" id="Q96C11">
    <property type="interactions" value="3"/>
</dbReference>
<dbReference type="STRING" id="9606.ENSP00000360262"/>
<dbReference type="iPTMnet" id="Q96C11"/>
<dbReference type="PhosphoSitePlus" id="Q96C11"/>
<dbReference type="BioMuta" id="FGGY"/>
<dbReference type="DMDM" id="172045850"/>
<dbReference type="jPOST" id="Q96C11"/>
<dbReference type="MassIVE" id="Q96C11"/>
<dbReference type="PaxDb" id="9606-ENSP00000360262"/>
<dbReference type="PeptideAtlas" id="Q96C11"/>
<dbReference type="ProteomicsDB" id="3030"/>
<dbReference type="ProteomicsDB" id="76142">
    <molecule id="Q96C11-1"/>
</dbReference>
<dbReference type="ProteomicsDB" id="76143">
    <molecule id="Q96C11-2"/>
</dbReference>
<dbReference type="ProteomicsDB" id="76144">
    <molecule id="Q96C11-3"/>
</dbReference>
<dbReference type="ProteomicsDB" id="76145">
    <molecule id="Q96C11-4"/>
</dbReference>
<dbReference type="ProteomicsDB" id="82738"/>
<dbReference type="Antibodypedia" id="33269">
    <property type="antibodies" value="124 antibodies from 23 providers"/>
</dbReference>
<dbReference type="DNASU" id="55277"/>
<dbReference type="Ensembl" id="ENST00000303721.12">
    <molecule id="Q96C11-1"/>
    <property type="protein sequence ID" value="ENSP00000305922.8"/>
    <property type="gene ID" value="ENSG00000172456.18"/>
</dbReference>
<dbReference type="Ensembl" id="ENST00000371210.1">
    <molecule id="Q96C11-6"/>
    <property type="protein sequence ID" value="ENSP00000360254.1"/>
    <property type="gene ID" value="ENSG00000172456.18"/>
</dbReference>
<dbReference type="Ensembl" id="ENST00000371212.5">
    <molecule id="Q96C11-5"/>
    <property type="protein sequence ID" value="ENSP00000360256.1"/>
    <property type="gene ID" value="ENSG00000172456.18"/>
</dbReference>
<dbReference type="Ensembl" id="ENST00000371218.8">
    <molecule id="Q96C11-3"/>
    <property type="protein sequence ID" value="ENSP00000360262.4"/>
    <property type="gene ID" value="ENSG00000172456.18"/>
</dbReference>
<dbReference type="Ensembl" id="ENST00000635156.1">
    <molecule id="Q96C11-5"/>
    <property type="protein sequence ID" value="ENSP00000489417.1"/>
    <property type="gene ID" value="ENSG00000172456.18"/>
</dbReference>
<dbReference type="GeneID" id="55277"/>
<dbReference type="KEGG" id="hsa:55277"/>
<dbReference type="MANE-Select" id="ENST00000303721.12">
    <property type="protein sequence ID" value="ENSP00000305922.8"/>
    <property type="RefSeq nucleotide sequence ID" value="NM_018291.5"/>
    <property type="RefSeq protein sequence ID" value="NP_060761.3"/>
</dbReference>
<dbReference type="UCSC" id="uc001czi.6">
    <molecule id="Q96C11-1"/>
    <property type="organism name" value="human"/>
</dbReference>
<dbReference type="AGR" id="HGNC:25610"/>
<dbReference type="CTD" id="55277"/>
<dbReference type="DisGeNET" id="55277"/>
<dbReference type="GeneCards" id="FGGY"/>
<dbReference type="HGNC" id="HGNC:25610">
    <property type="gene designation" value="FGGY"/>
</dbReference>
<dbReference type="HPA" id="ENSG00000172456">
    <property type="expression patterns" value="Tissue enhanced (liver)"/>
</dbReference>
<dbReference type="MalaCards" id="FGGY"/>
<dbReference type="MIM" id="105400">
    <property type="type" value="phenotype"/>
</dbReference>
<dbReference type="MIM" id="611370">
    <property type="type" value="gene"/>
</dbReference>
<dbReference type="neXtProt" id="NX_Q96C11"/>
<dbReference type="OpenTargets" id="ENSG00000172456"/>
<dbReference type="PharmGKB" id="PA162388453"/>
<dbReference type="VEuPathDB" id="HostDB:ENSG00000172456"/>
<dbReference type="eggNOG" id="KOG2517">
    <property type="taxonomic scope" value="Eukaryota"/>
</dbReference>
<dbReference type="GeneTree" id="ENSGT01000000214434"/>
<dbReference type="HOGENOM" id="CLU_009281_10_0_1"/>
<dbReference type="InParanoid" id="Q96C11"/>
<dbReference type="OMA" id="HKAMWHE"/>
<dbReference type="OrthoDB" id="203824at2759"/>
<dbReference type="PAN-GO" id="Q96C11">
    <property type="GO annotations" value="4 GO annotations based on evolutionary models"/>
</dbReference>
<dbReference type="PhylomeDB" id="Q96C11"/>
<dbReference type="TreeFam" id="TF300904"/>
<dbReference type="BioCyc" id="MetaCyc:ENSG00000172456-MONOMER"/>
<dbReference type="BRENDA" id="2.7.1.47">
    <property type="organism ID" value="2681"/>
</dbReference>
<dbReference type="PathwayCommons" id="Q96C11"/>
<dbReference type="SignaLink" id="Q96C11"/>
<dbReference type="UniPathway" id="UPA00246"/>
<dbReference type="BioGRID-ORCS" id="55277">
    <property type="hits" value="7 hits in 1156 CRISPR screens"/>
</dbReference>
<dbReference type="ChiTaRS" id="FGGY">
    <property type="organism name" value="human"/>
</dbReference>
<dbReference type="GenomeRNAi" id="55277"/>
<dbReference type="Pharos" id="Q96C11">
    <property type="development level" value="Tbio"/>
</dbReference>
<dbReference type="PRO" id="PR:Q96C11"/>
<dbReference type="Proteomes" id="UP000005640">
    <property type="component" value="Chromosome 1"/>
</dbReference>
<dbReference type="RNAct" id="Q96C11">
    <property type="molecule type" value="protein"/>
</dbReference>
<dbReference type="Bgee" id="ENSG00000172456">
    <property type="expression patterns" value="Expressed in right lobe of liver and 130 other cell types or tissues"/>
</dbReference>
<dbReference type="ExpressionAtlas" id="Q96C11">
    <property type="expression patterns" value="baseline and differential"/>
</dbReference>
<dbReference type="GO" id="GO:0005737">
    <property type="term" value="C:cytoplasm"/>
    <property type="evidence" value="ECO:0000318"/>
    <property type="project" value="GO_Central"/>
</dbReference>
<dbReference type="GO" id="GO:0019150">
    <property type="term" value="F:D-ribulokinase activity"/>
    <property type="evidence" value="ECO:0000318"/>
    <property type="project" value="GO_Central"/>
</dbReference>
<dbReference type="GO" id="GO:0046835">
    <property type="term" value="P:carbohydrate phosphorylation"/>
    <property type="evidence" value="ECO:0000314"/>
    <property type="project" value="UniProtKB"/>
</dbReference>
<dbReference type="GO" id="GO:0070050">
    <property type="term" value="P:neuron cellular homeostasis"/>
    <property type="evidence" value="ECO:0000315"/>
    <property type="project" value="UniProtKB"/>
</dbReference>
<dbReference type="GO" id="GO:0019321">
    <property type="term" value="P:pentose metabolic process"/>
    <property type="evidence" value="ECO:0000318"/>
    <property type="project" value="GO_Central"/>
</dbReference>
<dbReference type="CDD" id="cd07782">
    <property type="entry name" value="ASKHA_NBD_FGGY_D-RBK"/>
    <property type="match status" value="1"/>
</dbReference>
<dbReference type="FunFam" id="1.20.58.2240:FF:000002">
    <property type="entry name" value="FGGY carbohydrate kinase domain-containing protein"/>
    <property type="match status" value="1"/>
</dbReference>
<dbReference type="FunFam" id="3.30.420.40:FF:000101">
    <property type="entry name" value="FGGY carbohydrate kinase domain-containing protein"/>
    <property type="match status" value="1"/>
</dbReference>
<dbReference type="Gene3D" id="1.20.58.2240">
    <property type="match status" value="1"/>
</dbReference>
<dbReference type="Gene3D" id="3.30.420.40">
    <property type="match status" value="1"/>
</dbReference>
<dbReference type="InterPro" id="IPR043129">
    <property type="entry name" value="ATPase_NBD"/>
</dbReference>
<dbReference type="InterPro" id="IPR000577">
    <property type="entry name" value="Carb_kinase_FGGY"/>
</dbReference>
<dbReference type="InterPro" id="IPR018485">
    <property type="entry name" value="FGGY_C"/>
</dbReference>
<dbReference type="InterPro" id="IPR018484">
    <property type="entry name" value="FGGY_N"/>
</dbReference>
<dbReference type="InterPro" id="IPR006003">
    <property type="entry name" value="FGGY_RbtK-like"/>
</dbReference>
<dbReference type="NCBIfam" id="TIGR01315">
    <property type="entry name" value="5C_CHO_kinase"/>
    <property type="match status" value="1"/>
</dbReference>
<dbReference type="PANTHER" id="PTHR43435:SF4">
    <property type="entry name" value="FGGY CARBOHYDRATE KINASE DOMAIN-CONTAINING PROTEIN"/>
    <property type="match status" value="1"/>
</dbReference>
<dbReference type="PANTHER" id="PTHR43435">
    <property type="entry name" value="RIBULOKINASE"/>
    <property type="match status" value="1"/>
</dbReference>
<dbReference type="Pfam" id="PF02782">
    <property type="entry name" value="FGGY_C"/>
    <property type="match status" value="1"/>
</dbReference>
<dbReference type="Pfam" id="PF00370">
    <property type="entry name" value="FGGY_N"/>
    <property type="match status" value="1"/>
</dbReference>
<dbReference type="PIRSF" id="PIRSF000538">
    <property type="entry name" value="GlpK"/>
    <property type="match status" value="1"/>
</dbReference>
<dbReference type="SUPFAM" id="SSF53067">
    <property type="entry name" value="Actin-like ATPase domain"/>
    <property type="match status" value="2"/>
</dbReference>
<accession>Q96C11</accession>
<accession>B1AK92</accession>
<accession>B1AK93</accession>
<accession>B1AK94</accession>
<accession>B2RDR8</accession>
<accession>D3DQ56</accession>
<accession>Q9HA63</accession>
<accession>Q9NV20</accession>
<keyword id="KW-0025">Alternative splicing</keyword>
<keyword id="KW-0036">Amyotrophic lateral sclerosis</keyword>
<keyword id="KW-0418">Kinase</keyword>
<keyword id="KW-0523">Neurodegeneration</keyword>
<keyword id="KW-1267">Proteomics identification</keyword>
<keyword id="KW-1185">Reference proteome</keyword>
<keyword id="KW-0808">Transferase</keyword>
<name>FGGY_HUMAN</name>
<comment type="function">
    <text evidence="2">Catalyzes ATP-dependent phosphorylation of D-ribulose at C-5 to form D-ribulose 5-phosphate. Postulated to function in a metabolite repair mechanism by preventing toxic accumulation of free D-ribulose formed by non-specific phosphatase activities. Alternatively, may play a role in regulating D-ribulose 5-phosphate recycling in the pentose phosphate pathway. Can phosphorylate ribitol with low efficiency.</text>
</comment>
<comment type="catalytic activity">
    <reaction evidence="2">
        <text>D-ribulose + ATP = D-ribulose 5-phosphate + ADP + H(+)</text>
        <dbReference type="Rhea" id="RHEA:17601"/>
        <dbReference type="ChEBI" id="CHEBI:15378"/>
        <dbReference type="ChEBI" id="CHEBI:17173"/>
        <dbReference type="ChEBI" id="CHEBI:30616"/>
        <dbReference type="ChEBI" id="CHEBI:58121"/>
        <dbReference type="ChEBI" id="CHEBI:456216"/>
        <dbReference type="EC" id="2.7.1.47"/>
    </reaction>
    <physiologicalReaction direction="left-to-right" evidence="6">
        <dbReference type="Rhea" id="RHEA:17602"/>
    </physiologicalReaction>
</comment>
<comment type="biophysicochemical properties">
    <kinetics>
        <KM evidence="2">97 uM for D-ribulose</KM>
        <KM evidence="2">1468 uM for ribitol</KM>
        <Vmax evidence="2">5.6 umol/min/mg enzyme toward D-ribulose</Vmax>
        <Vmax evidence="2">2.4 umol/min/mg enzyme toward ribitol</Vmax>
    </kinetics>
</comment>
<comment type="pathway">
    <text evidence="6">Carbohydrate metabolism; pentose and glucuronate interconversion.</text>
</comment>
<comment type="alternative products">
    <event type="alternative splicing"/>
    <isoform>
        <id>Q96C11-1</id>
        <name>1</name>
        <sequence type="displayed"/>
    </isoform>
    <isoform>
        <id>Q96C11-2</id>
        <name>2</name>
        <sequence type="described" ref="VSP_032658 VSP_032659"/>
    </isoform>
    <isoform>
        <id>Q96C11-4</id>
        <name>3</name>
        <sequence type="described" ref="VSP_032658"/>
    </isoform>
    <isoform>
        <id>Q96C11-3</id>
        <name>4</name>
        <sequence type="described" ref="VSP_033424"/>
    </isoform>
    <isoform>
        <id>Q96C11-5</id>
        <name>5</name>
        <sequence type="described" ref="VSP_045338"/>
    </isoform>
    <isoform>
        <id>Q96C11-6</id>
        <name>6</name>
        <sequence type="described" ref="VSP_054533"/>
    </isoform>
</comment>
<comment type="tissue specificity">
    <text evidence="1">Expressed in kidney, lung and small intestine and to a lower extent in liver and detected in cerebrospinal fluid (at protein level).</text>
</comment>
<comment type="developmental stage">
    <text evidence="1">Expressed in fetal brain (at protein level).</text>
</comment>
<comment type="disease" evidence="1">
    <disease id="DI-00107">
        <name>Amyotrophic lateral sclerosis</name>
        <acronym>ALS</acronym>
        <description>A neurodegenerative disorder affecting upper motor neurons in the brain and lower motor neurons in the brain stem and spinal cord, resulting in fatal paralysis. Sensory abnormalities are absent. The pathologic hallmarks of the disease include pallor of the corticospinal tract due to loss of motor neurons, presence of ubiquitin-positive inclusions within surviving motor neurons, and deposition of pathologic aggregates. The etiology of amyotrophic lateral sclerosis is likely to be multifactorial, involving both genetic and environmental factors. The disease is inherited in 5-10% of the cases.</description>
        <dbReference type="MIM" id="105400"/>
    </disease>
    <text>Disease susceptibility is associated with variants affecting the gene represented in this entry.</text>
</comment>
<comment type="similarity">
    <text evidence="5">Belongs to the FGGY kinase family.</text>
</comment>
<comment type="sequence caution" evidence="5">
    <conflict type="erroneous initiation">
        <sequence resource="EMBL-CDS" id="AAH14947"/>
    </conflict>
</comment>
<reference key="1">
    <citation type="journal article" date="2004" name="Nat. Genet.">
        <title>Complete sequencing and characterization of 21,243 full-length human cDNAs.</title>
        <authorList>
            <person name="Ota T."/>
            <person name="Suzuki Y."/>
            <person name="Nishikawa T."/>
            <person name="Otsuki T."/>
            <person name="Sugiyama T."/>
            <person name="Irie R."/>
            <person name="Wakamatsu A."/>
            <person name="Hayashi K."/>
            <person name="Sato H."/>
            <person name="Nagai K."/>
            <person name="Kimura K."/>
            <person name="Makita H."/>
            <person name="Sekine M."/>
            <person name="Obayashi M."/>
            <person name="Nishi T."/>
            <person name="Shibahara T."/>
            <person name="Tanaka T."/>
            <person name="Ishii S."/>
            <person name="Yamamoto J."/>
            <person name="Saito K."/>
            <person name="Kawai Y."/>
            <person name="Isono Y."/>
            <person name="Nakamura Y."/>
            <person name="Nagahari K."/>
            <person name="Murakami K."/>
            <person name="Yasuda T."/>
            <person name="Iwayanagi T."/>
            <person name="Wagatsuma M."/>
            <person name="Shiratori A."/>
            <person name="Sudo H."/>
            <person name="Hosoiri T."/>
            <person name="Kaku Y."/>
            <person name="Kodaira H."/>
            <person name="Kondo H."/>
            <person name="Sugawara M."/>
            <person name="Takahashi M."/>
            <person name="Kanda K."/>
            <person name="Yokoi T."/>
            <person name="Furuya T."/>
            <person name="Kikkawa E."/>
            <person name="Omura Y."/>
            <person name="Abe K."/>
            <person name="Kamihara K."/>
            <person name="Katsuta N."/>
            <person name="Sato K."/>
            <person name="Tanikawa M."/>
            <person name="Yamazaki M."/>
            <person name="Ninomiya K."/>
            <person name="Ishibashi T."/>
            <person name="Yamashita H."/>
            <person name="Murakawa K."/>
            <person name="Fujimori K."/>
            <person name="Tanai H."/>
            <person name="Kimata M."/>
            <person name="Watanabe M."/>
            <person name="Hiraoka S."/>
            <person name="Chiba Y."/>
            <person name="Ishida S."/>
            <person name="Ono Y."/>
            <person name="Takiguchi S."/>
            <person name="Watanabe S."/>
            <person name="Yosida M."/>
            <person name="Hotuta T."/>
            <person name="Kusano J."/>
            <person name="Kanehori K."/>
            <person name="Takahashi-Fujii A."/>
            <person name="Hara H."/>
            <person name="Tanase T.-O."/>
            <person name="Nomura Y."/>
            <person name="Togiya S."/>
            <person name="Komai F."/>
            <person name="Hara R."/>
            <person name="Takeuchi K."/>
            <person name="Arita M."/>
            <person name="Imose N."/>
            <person name="Musashino K."/>
            <person name="Yuuki H."/>
            <person name="Oshima A."/>
            <person name="Sasaki N."/>
            <person name="Aotsuka S."/>
            <person name="Yoshikawa Y."/>
            <person name="Matsunawa H."/>
            <person name="Ichihara T."/>
            <person name="Shiohata N."/>
            <person name="Sano S."/>
            <person name="Moriya S."/>
            <person name="Momiyama H."/>
            <person name="Satoh N."/>
            <person name="Takami S."/>
            <person name="Terashima Y."/>
            <person name="Suzuki O."/>
            <person name="Nakagawa S."/>
            <person name="Senoh A."/>
            <person name="Mizoguchi H."/>
            <person name="Goto Y."/>
            <person name="Shimizu F."/>
            <person name="Wakebe H."/>
            <person name="Hishigaki H."/>
            <person name="Watanabe T."/>
            <person name="Sugiyama A."/>
            <person name="Takemoto M."/>
            <person name="Kawakami B."/>
            <person name="Yamazaki M."/>
            <person name="Watanabe K."/>
            <person name="Kumagai A."/>
            <person name="Itakura S."/>
            <person name="Fukuzumi Y."/>
            <person name="Fujimori Y."/>
            <person name="Komiyama M."/>
            <person name="Tashiro H."/>
            <person name="Tanigami A."/>
            <person name="Fujiwara T."/>
            <person name="Ono T."/>
            <person name="Yamada K."/>
            <person name="Fujii Y."/>
            <person name="Ozaki K."/>
            <person name="Hirao M."/>
            <person name="Ohmori Y."/>
            <person name="Kawabata A."/>
            <person name="Hikiji T."/>
            <person name="Kobatake N."/>
            <person name="Inagaki H."/>
            <person name="Ikema Y."/>
            <person name="Okamoto S."/>
            <person name="Okitani R."/>
            <person name="Kawakami T."/>
            <person name="Noguchi S."/>
            <person name="Itoh T."/>
            <person name="Shigeta K."/>
            <person name="Senba T."/>
            <person name="Matsumura K."/>
            <person name="Nakajima Y."/>
            <person name="Mizuno T."/>
            <person name="Morinaga M."/>
            <person name="Sasaki M."/>
            <person name="Togashi T."/>
            <person name="Oyama M."/>
            <person name="Hata H."/>
            <person name="Watanabe M."/>
            <person name="Komatsu T."/>
            <person name="Mizushima-Sugano J."/>
            <person name="Satoh T."/>
            <person name="Shirai Y."/>
            <person name="Takahashi Y."/>
            <person name="Nakagawa K."/>
            <person name="Okumura K."/>
            <person name="Nagase T."/>
            <person name="Nomura N."/>
            <person name="Kikuchi H."/>
            <person name="Masuho Y."/>
            <person name="Yamashita R."/>
            <person name="Nakai K."/>
            <person name="Yada T."/>
            <person name="Nakamura Y."/>
            <person name="Ohara O."/>
            <person name="Isogai T."/>
            <person name="Sugano S."/>
        </authorList>
    </citation>
    <scope>NUCLEOTIDE SEQUENCE [LARGE SCALE MRNA] (ISOFORMS 2; 3; 5 AND 6)</scope>
    <source>
        <tissue>Cerebellum</tissue>
        <tissue>Mammary gland</tissue>
        <tissue>Placenta</tissue>
        <tissue>Synovium</tissue>
    </source>
</reference>
<reference key="2">
    <citation type="journal article" date="2006" name="Nature">
        <title>The DNA sequence and biological annotation of human chromosome 1.</title>
        <authorList>
            <person name="Gregory S.G."/>
            <person name="Barlow K.F."/>
            <person name="McLay K.E."/>
            <person name="Kaul R."/>
            <person name="Swarbreck D."/>
            <person name="Dunham A."/>
            <person name="Scott C.E."/>
            <person name="Howe K.L."/>
            <person name="Woodfine K."/>
            <person name="Spencer C.C.A."/>
            <person name="Jones M.C."/>
            <person name="Gillson C."/>
            <person name="Searle S."/>
            <person name="Zhou Y."/>
            <person name="Kokocinski F."/>
            <person name="McDonald L."/>
            <person name="Evans R."/>
            <person name="Phillips K."/>
            <person name="Atkinson A."/>
            <person name="Cooper R."/>
            <person name="Jones C."/>
            <person name="Hall R.E."/>
            <person name="Andrews T.D."/>
            <person name="Lloyd C."/>
            <person name="Ainscough R."/>
            <person name="Almeida J.P."/>
            <person name="Ambrose K.D."/>
            <person name="Anderson F."/>
            <person name="Andrew R.W."/>
            <person name="Ashwell R.I.S."/>
            <person name="Aubin K."/>
            <person name="Babbage A.K."/>
            <person name="Bagguley C.L."/>
            <person name="Bailey J."/>
            <person name="Beasley H."/>
            <person name="Bethel G."/>
            <person name="Bird C.P."/>
            <person name="Bray-Allen S."/>
            <person name="Brown J.Y."/>
            <person name="Brown A.J."/>
            <person name="Buckley D."/>
            <person name="Burton J."/>
            <person name="Bye J."/>
            <person name="Carder C."/>
            <person name="Chapman J.C."/>
            <person name="Clark S.Y."/>
            <person name="Clarke G."/>
            <person name="Clee C."/>
            <person name="Cobley V."/>
            <person name="Collier R.E."/>
            <person name="Corby N."/>
            <person name="Coville G.J."/>
            <person name="Davies J."/>
            <person name="Deadman R."/>
            <person name="Dunn M."/>
            <person name="Earthrowl M."/>
            <person name="Ellington A.G."/>
            <person name="Errington H."/>
            <person name="Frankish A."/>
            <person name="Frankland J."/>
            <person name="French L."/>
            <person name="Garner P."/>
            <person name="Garnett J."/>
            <person name="Gay L."/>
            <person name="Ghori M.R.J."/>
            <person name="Gibson R."/>
            <person name="Gilby L.M."/>
            <person name="Gillett W."/>
            <person name="Glithero R.J."/>
            <person name="Grafham D.V."/>
            <person name="Griffiths C."/>
            <person name="Griffiths-Jones S."/>
            <person name="Grocock R."/>
            <person name="Hammond S."/>
            <person name="Harrison E.S.I."/>
            <person name="Hart E."/>
            <person name="Haugen E."/>
            <person name="Heath P.D."/>
            <person name="Holmes S."/>
            <person name="Holt K."/>
            <person name="Howden P.J."/>
            <person name="Hunt A.R."/>
            <person name="Hunt S.E."/>
            <person name="Hunter G."/>
            <person name="Isherwood J."/>
            <person name="James R."/>
            <person name="Johnson C."/>
            <person name="Johnson D."/>
            <person name="Joy A."/>
            <person name="Kay M."/>
            <person name="Kershaw J.K."/>
            <person name="Kibukawa M."/>
            <person name="Kimberley A.M."/>
            <person name="King A."/>
            <person name="Knights A.J."/>
            <person name="Lad H."/>
            <person name="Laird G."/>
            <person name="Lawlor S."/>
            <person name="Leongamornlert D.A."/>
            <person name="Lloyd D.M."/>
            <person name="Loveland J."/>
            <person name="Lovell J."/>
            <person name="Lush M.J."/>
            <person name="Lyne R."/>
            <person name="Martin S."/>
            <person name="Mashreghi-Mohammadi M."/>
            <person name="Matthews L."/>
            <person name="Matthews N.S.W."/>
            <person name="McLaren S."/>
            <person name="Milne S."/>
            <person name="Mistry S."/>
            <person name="Moore M.J.F."/>
            <person name="Nickerson T."/>
            <person name="O'Dell C.N."/>
            <person name="Oliver K."/>
            <person name="Palmeiri A."/>
            <person name="Palmer S.A."/>
            <person name="Parker A."/>
            <person name="Patel D."/>
            <person name="Pearce A.V."/>
            <person name="Peck A.I."/>
            <person name="Pelan S."/>
            <person name="Phelps K."/>
            <person name="Phillimore B.J."/>
            <person name="Plumb R."/>
            <person name="Rajan J."/>
            <person name="Raymond C."/>
            <person name="Rouse G."/>
            <person name="Saenphimmachak C."/>
            <person name="Sehra H.K."/>
            <person name="Sheridan E."/>
            <person name="Shownkeen R."/>
            <person name="Sims S."/>
            <person name="Skuce C.D."/>
            <person name="Smith M."/>
            <person name="Steward C."/>
            <person name="Subramanian S."/>
            <person name="Sycamore N."/>
            <person name="Tracey A."/>
            <person name="Tromans A."/>
            <person name="Van Helmond Z."/>
            <person name="Wall M."/>
            <person name="Wallis J.M."/>
            <person name="White S."/>
            <person name="Whitehead S.L."/>
            <person name="Wilkinson J.E."/>
            <person name="Willey D.L."/>
            <person name="Williams H."/>
            <person name="Wilming L."/>
            <person name="Wray P.W."/>
            <person name="Wu Z."/>
            <person name="Coulson A."/>
            <person name="Vaudin M."/>
            <person name="Sulston J.E."/>
            <person name="Durbin R.M."/>
            <person name="Hubbard T."/>
            <person name="Wooster R."/>
            <person name="Dunham I."/>
            <person name="Carter N.P."/>
            <person name="McVean G."/>
            <person name="Ross M.T."/>
            <person name="Harrow J."/>
            <person name="Olson M.V."/>
            <person name="Beck S."/>
            <person name="Rogers J."/>
            <person name="Bentley D.R."/>
        </authorList>
    </citation>
    <scope>NUCLEOTIDE SEQUENCE [LARGE SCALE GENOMIC DNA]</scope>
</reference>
<reference key="3">
    <citation type="submission" date="2005-09" db="EMBL/GenBank/DDBJ databases">
        <authorList>
            <person name="Mural R.J."/>
            <person name="Istrail S."/>
            <person name="Sutton G.G."/>
            <person name="Florea L."/>
            <person name="Halpern A.L."/>
            <person name="Mobarry C.M."/>
            <person name="Lippert R."/>
            <person name="Walenz B."/>
            <person name="Shatkay H."/>
            <person name="Dew I."/>
            <person name="Miller J.R."/>
            <person name="Flanigan M.J."/>
            <person name="Edwards N.J."/>
            <person name="Bolanos R."/>
            <person name="Fasulo D."/>
            <person name="Halldorsson B.V."/>
            <person name="Hannenhalli S."/>
            <person name="Turner R."/>
            <person name="Yooseph S."/>
            <person name="Lu F."/>
            <person name="Nusskern D.R."/>
            <person name="Shue B.C."/>
            <person name="Zheng X.H."/>
            <person name="Zhong F."/>
            <person name="Delcher A.L."/>
            <person name="Huson D.H."/>
            <person name="Kravitz S.A."/>
            <person name="Mouchard L."/>
            <person name="Reinert K."/>
            <person name="Remington K.A."/>
            <person name="Clark A.G."/>
            <person name="Waterman M.S."/>
            <person name="Eichler E.E."/>
            <person name="Adams M.D."/>
            <person name="Hunkapiller M.W."/>
            <person name="Myers E.W."/>
            <person name="Venter J.C."/>
        </authorList>
    </citation>
    <scope>NUCLEOTIDE SEQUENCE [LARGE SCALE GENOMIC DNA]</scope>
</reference>
<reference key="4">
    <citation type="journal article" date="2004" name="Genome Res.">
        <title>The status, quality, and expansion of the NIH full-length cDNA project: the Mammalian Gene Collection (MGC).</title>
        <authorList>
            <consortium name="The MGC Project Team"/>
        </authorList>
    </citation>
    <scope>NUCLEOTIDE SEQUENCE [LARGE SCALE MRNA] (ISOFORM 1)</scope>
    <source>
        <tissue>Skin</tissue>
    </source>
</reference>
<reference key="5">
    <citation type="journal article" date="2017" name="J. Biol. Chem.">
        <title>Molecular Identification of d-Ribulokinase in Budding Yeast and Mammals.</title>
        <authorList>
            <person name="Singh C."/>
            <person name="Glaab E."/>
            <person name="Linster C.L."/>
        </authorList>
    </citation>
    <scope>FUNCTION</scope>
    <scope>CATALYTIC ACTIVITY</scope>
    <scope>BIOPHYSICOCHEMICAL PROPERTIES</scope>
    <scope>PATHWAY</scope>
</reference>
<reference key="6">
    <citation type="journal article" date="2007" name="N. Engl. J. Med.">
        <title>Whole-genome analysis of sporadic amyotrophic lateral sclerosis.</title>
        <authorList>
            <person name="Dunckley T."/>
            <person name="Huentelman M.J."/>
            <person name="Craig D.W."/>
            <person name="Pearson J.V."/>
            <person name="Szelinger S."/>
            <person name="Joshipura K."/>
            <person name="Halperin R.F."/>
            <person name="Stamper C."/>
            <person name="Jensen K.R."/>
            <person name="Letizia D."/>
            <person name="Hesterlee S.E."/>
            <person name="Pestronk A."/>
            <person name="Levine T."/>
            <person name="Bertorini T."/>
            <person name="Graves M.C."/>
            <person name="Mozaffar T."/>
            <person name="Jackson C.E."/>
            <person name="Bosch P."/>
            <person name="McVey A."/>
            <person name="Dick A."/>
            <person name="Barohn R."/>
            <person name="Lomen-Hoerth C."/>
            <person name="Rosenfeld J."/>
            <person name="O'connor D.T."/>
            <person name="Zhang K."/>
            <person name="Crook R."/>
            <person name="Ryberg H."/>
            <person name="Hutton M."/>
            <person name="Katz J."/>
            <person name="Simpson E.P."/>
            <person name="Mitsumoto H."/>
            <person name="Bowser R."/>
            <person name="Miller R.G."/>
            <person name="Appel S.H."/>
            <person name="Stephan D.A."/>
        </authorList>
    </citation>
    <scope>INVOLVEMENT IN SPORADIC AMYOTROPHIC LATERAL SCLEROSIS</scope>
    <scope>TISSUE SPECIFICITY</scope>
    <scope>DEVELOPMENTAL STAGE</scope>
</reference>